<protein>
    <recommendedName>
        <fullName evidence="1">Phosphoenolpyruvate carboxykinase (ATP)</fullName>
        <shortName evidence="1">PCK</shortName>
        <shortName evidence="1">PEP carboxykinase</shortName>
        <shortName evidence="1">PEPCK</shortName>
        <ecNumber evidence="1">4.1.1.49</ecNumber>
    </recommendedName>
</protein>
<reference key="1">
    <citation type="journal article" date="2008" name="Chem. Biol. Interact.">
        <title>Extending the Bacillus cereus group genomics to putative food-borne pathogens of different toxicity.</title>
        <authorList>
            <person name="Lapidus A."/>
            <person name="Goltsman E."/>
            <person name="Auger S."/>
            <person name="Galleron N."/>
            <person name="Segurens B."/>
            <person name="Dossat C."/>
            <person name="Land M.L."/>
            <person name="Broussolle V."/>
            <person name="Brillard J."/>
            <person name="Guinebretiere M.-H."/>
            <person name="Sanchis V."/>
            <person name="Nguen-the C."/>
            <person name="Lereclus D."/>
            <person name="Richardson P."/>
            <person name="Wincker P."/>
            <person name="Weissenbach J."/>
            <person name="Ehrlich S.D."/>
            <person name="Sorokin A."/>
        </authorList>
    </citation>
    <scope>NUCLEOTIDE SEQUENCE [LARGE SCALE GENOMIC DNA]</scope>
    <source>
        <strain>DSM 22905 / CIP 110041 / 391-98 / NVH 391-98</strain>
    </source>
</reference>
<evidence type="ECO:0000255" key="1">
    <source>
        <dbReference type="HAMAP-Rule" id="MF_00453"/>
    </source>
</evidence>
<comment type="function">
    <text evidence="1">Involved in the gluconeogenesis. Catalyzes the conversion of oxaloacetate (OAA) to phosphoenolpyruvate (PEP) through direct phosphoryl transfer between the nucleoside triphosphate and OAA.</text>
</comment>
<comment type="catalytic activity">
    <reaction evidence="1">
        <text>oxaloacetate + ATP = phosphoenolpyruvate + ADP + CO2</text>
        <dbReference type="Rhea" id="RHEA:18617"/>
        <dbReference type="ChEBI" id="CHEBI:16452"/>
        <dbReference type="ChEBI" id="CHEBI:16526"/>
        <dbReference type="ChEBI" id="CHEBI:30616"/>
        <dbReference type="ChEBI" id="CHEBI:58702"/>
        <dbReference type="ChEBI" id="CHEBI:456216"/>
        <dbReference type="EC" id="4.1.1.49"/>
    </reaction>
</comment>
<comment type="cofactor">
    <cofactor evidence="1">
        <name>Mn(2+)</name>
        <dbReference type="ChEBI" id="CHEBI:29035"/>
    </cofactor>
    <text evidence="1">Binds 1 Mn(2+) ion per subunit.</text>
</comment>
<comment type="pathway">
    <text evidence="1">Carbohydrate biosynthesis; gluconeogenesis.</text>
</comment>
<comment type="subcellular location">
    <subcellularLocation>
        <location evidence="1">Cytoplasm</location>
    </subcellularLocation>
</comment>
<comment type="similarity">
    <text evidence="1">Belongs to the phosphoenolpyruvate carboxykinase (ATP) family.</text>
</comment>
<dbReference type="EC" id="4.1.1.49" evidence="1"/>
<dbReference type="EMBL" id="CP000764">
    <property type="protein sequence ID" value="ABS23649.1"/>
    <property type="molecule type" value="Genomic_DNA"/>
</dbReference>
<dbReference type="RefSeq" id="WP_012095897.1">
    <property type="nucleotide sequence ID" value="NC_009674.1"/>
</dbReference>
<dbReference type="SMR" id="A7GU41"/>
<dbReference type="STRING" id="315749.Bcer98_3438"/>
<dbReference type="GeneID" id="33898676"/>
<dbReference type="KEGG" id="bcy:Bcer98_3438"/>
<dbReference type="eggNOG" id="COG1866">
    <property type="taxonomic scope" value="Bacteria"/>
</dbReference>
<dbReference type="HOGENOM" id="CLU_018247_0_1_9"/>
<dbReference type="OrthoDB" id="9806325at2"/>
<dbReference type="UniPathway" id="UPA00138"/>
<dbReference type="Proteomes" id="UP000002300">
    <property type="component" value="Chromosome"/>
</dbReference>
<dbReference type="GO" id="GO:0005829">
    <property type="term" value="C:cytosol"/>
    <property type="evidence" value="ECO:0007669"/>
    <property type="project" value="TreeGrafter"/>
</dbReference>
<dbReference type="GO" id="GO:0005524">
    <property type="term" value="F:ATP binding"/>
    <property type="evidence" value="ECO:0007669"/>
    <property type="project" value="UniProtKB-UniRule"/>
</dbReference>
<dbReference type="GO" id="GO:0046872">
    <property type="term" value="F:metal ion binding"/>
    <property type="evidence" value="ECO:0007669"/>
    <property type="project" value="UniProtKB-KW"/>
</dbReference>
<dbReference type="GO" id="GO:0004612">
    <property type="term" value="F:phosphoenolpyruvate carboxykinase (ATP) activity"/>
    <property type="evidence" value="ECO:0007669"/>
    <property type="project" value="UniProtKB-UniRule"/>
</dbReference>
<dbReference type="GO" id="GO:0006094">
    <property type="term" value="P:gluconeogenesis"/>
    <property type="evidence" value="ECO:0007669"/>
    <property type="project" value="UniProtKB-UniRule"/>
</dbReference>
<dbReference type="CDD" id="cd00484">
    <property type="entry name" value="PEPCK_ATP"/>
    <property type="match status" value="1"/>
</dbReference>
<dbReference type="FunFam" id="2.170.8.10:FF:000001">
    <property type="entry name" value="Phosphoenolpyruvate carboxykinase (ATP)"/>
    <property type="match status" value="1"/>
</dbReference>
<dbReference type="FunFam" id="3.40.449.10:FF:000001">
    <property type="entry name" value="Phosphoenolpyruvate carboxykinase (ATP)"/>
    <property type="match status" value="1"/>
</dbReference>
<dbReference type="Gene3D" id="3.90.228.20">
    <property type="match status" value="1"/>
</dbReference>
<dbReference type="Gene3D" id="3.40.449.10">
    <property type="entry name" value="Phosphoenolpyruvate Carboxykinase, domain 1"/>
    <property type="match status" value="1"/>
</dbReference>
<dbReference type="Gene3D" id="2.170.8.10">
    <property type="entry name" value="Phosphoenolpyruvate Carboxykinase, domain 2"/>
    <property type="match status" value="1"/>
</dbReference>
<dbReference type="HAMAP" id="MF_00453">
    <property type="entry name" value="PEPCK_ATP"/>
    <property type="match status" value="1"/>
</dbReference>
<dbReference type="InterPro" id="IPR001272">
    <property type="entry name" value="PEP_carboxykinase_ATP"/>
</dbReference>
<dbReference type="InterPro" id="IPR013035">
    <property type="entry name" value="PEP_carboxykinase_C"/>
</dbReference>
<dbReference type="InterPro" id="IPR008210">
    <property type="entry name" value="PEP_carboxykinase_N"/>
</dbReference>
<dbReference type="InterPro" id="IPR015994">
    <property type="entry name" value="PEPCK_ATP_CS"/>
</dbReference>
<dbReference type="NCBIfam" id="TIGR00224">
    <property type="entry name" value="pckA"/>
    <property type="match status" value="1"/>
</dbReference>
<dbReference type="NCBIfam" id="NF006820">
    <property type="entry name" value="PRK09344.1-2"/>
    <property type="match status" value="1"/>
</dbReference>
<dbReference type="NCBIfam" id="NF006821">
    <property type="entry name" value="PRK09344.1-3"/>
    <property type="match status" value="1"/>
</dbReference>
<dbReference type="PANTHER" id="PTHR30031:SF0">
    <property type="entry name" value="PHOSPHOENOLPYRUVATE CARBOXYKINASE (ATP)"/>
    <property type="match status" value="1"/>
</dbReference>
<dbReference type="PANTHER" id="PTHR30031">
    <property type="entry name" value="PHOSPHOENOLPYRUVATE CARBOXYKINASE ATP"/>
    <property type="match status" value="1"/>
</dbReference>
<dbReference type="Pfam" id="PF01293">
    <property type="entry name" value="PEPCK_ATP"/>
    <property type="match status" value="1"/>
</dbReference>
<dbReference type="PIRSF" id="PIRSF006294">
    <property type="entry name" value="PEP_crbxkin"/>
    <property type="match status" value="1"/>
</dbReference>
<dbReference type="SUPFAM" id="SSF68923">
    <property type="entry name" value="PEP carboxykinase N-terminal domain"/>
    <property type="match status" value="1"/>
</dbReference>
<dbReference type="SUPFAM" id="SSF53795">
    <property type="entry name" value="PEP carboxykinase-like"/>
    <property type="match status" value="1"/>
</dbReference>
<dbReference type="PROSITE" id="PS00532">
    <property type="entry name" value="PEPCK_ATP"/>
    <property type="match status" value="1"/>
</dbReference>
<organism>
    <name type="scientific">Bacillus cytotoxicus (strain DSM 22905 / CIP 110041 / 391-98 / NVH 391-98)</name>
    <dbReference type="NCBI Taxonomy" id="315749"/>
    <lineage>
        <taxon>Bacteria</taxon>
        <taxon>Bacillati</taxon>
        <taxon>Bacillota</taxon>
        <taxon>Bacilli</taxon>
        <taxon>Bacillales</taxon>
        <taxon>Bacillaceae</taxon>
        <taxon>Bacillus</taxon>
        <taxon>Bacillus cereus group</taxon>
    </lineage>
</organism>
<accession>A7GU41</accession>
<sequence length="528" mass="58078">MSTVNVQIGLHELLNGSNAQIQLSVPQLVEKVLMRNEGKLTSTGAVSASTGKYTGRSPKDKFIVKEPSVANKIAWGPVNQPISEERFNKLYTKVLEYLKEKEELFVFKGFAGADRNYRLPIQVVNEYAWHNLFVHQLFIRPTEEELANHNAPFTIVSAPNFKADPAVDGTNSEAFIIVSFEKRIVLIGGTEYAGEMKKSIFSIMNFLLPEQDILSMHCSANVGEEGDVALFFGLSGTGKTTLSADPHRKLIGDDEHGWSDNGVFNIEGGCYAKCINLSHEKEPQIFDAIKFGSVLENVIVDDKTRIADYSDTALTENTRAAYPIDAIDNIVLPSVAGHPNTIIFLTADASGVLPPISKLSKEQAMYHFLSGYTSKLAGTERGVTSPQATFSTCFGSPFLPLDASRYAEMLGEKIEKHDAKVFLVNTGWTGGEYGVGKRMNLAYTRAMVQAALNGELDKVETVKHDIFGLDVPLHVPSVPDEVLMPEQTWADQAAYKQKAIELANQFKENFKKFDNVSKDIINLGGPTA</sequence>
<name>PCKA_BACCN</name>
<feature type="chain" id="PRO_1000080990" description="Phosphoenolpyruvate carboxykinase (ATP)">
    <location>
        <begin position="1"/>
        <end position="528"/>
    </location>
</feature>
<feature type="binding site" evidence="1">
    <location>
        <position position="56"/>
    </location>
    <ligand>
        <name>substrate</name>
    </ligand>
</feature>
<feature type="binding site" evidence="1">
    <location>
        <position position="192"/>
    </location>
    <ligand>
        <name>substrate</name>
    </ligand>
</feature>
<feature type="binding site" evidence="1">
    <location>
        <position position="198"/>
    </location>
    <ligand>
        <name>ATP</name>
        <dbReference type="ChEBI" id="CHEBI:30616"/>
    </ligand>
</feature>
<feature type="binding site" evidence="1">
    <location>
        <position position="198"/>
    </location>
    <ligand>
        <name>Mn(2+)</name>
        <dbReference type="ChEBI" id="CHEBI:29035"/>
    </ligand>
</feature>
<feature type="binding site" evidence="1">
    <location>
        <position position="198"/>
    </location>
    <ligand>
        <name>substrate</name>
    </ligand>
</feature>
<feature type="binding site" evidence="1">
    <location>
        <position position="217"/>
    </location>
    <ligand>
        <name>ATP</name>
        <dbReference type="ChEBI" id="CHEBI:30616"/>
    </ligand>
</feature>
<feature type="binding site" evidence="1">
    <location>
        <position position="217"/>
    </location>
    <ligand>
        <name>Mn(2+)</name>
        <dbReference type="ChEBI" id="CHEBI:29035"/>
    </ligand>
</feature>
<feature type="binding site" evidence="1">
    <location>
        <begin position="233"/>
        <end position="241"/>
    </location>
    <ligand>
        <name>ATP</name>
        <dbReference type="ChEBI" id="CHEBI:30616"/>
    </ligand>
</feature>
<feature type="binding site" evidence="1">
    <location>
        <position position="254"/>
    </location>
    <ligand>
        <name>Mn(2+)</name>
        <dbReference type="ChEBI" id="CHEBI:29035"/>
    </ligand>
</feature>
<feature type="binding site" evidence="1">
    <location>
        <position position="282"/>
    </location>
    <ligand>
        <name>ATP</name>
        <dbReference type="ChEBI" id="CHEBI:30616"/>
    </ligand>
</feature>
<feature type="binding site" evidence="1">
    <location>
        <position position="319"/>
    </location>
    <ligand>
        <name>ATP</name>
        <dbReference type="ChEBI" id="CHEBI:30616"/>
    </ligand>
</feature>
<feature type="binding site" evidence="1">
    <location>
        <position position="319"/>
    </location>
    <ligand>
        <name>substrate</name>
    </ligand>
</feature>
<feature type="binding site" evidence="1">
    <location>
        <position position="444"/>
    </location>
    <ligand>
        <name>ATP</name>
        <dbReference type="ChEBI" id="CHEBI:30616"/>
    </ligand>
</feature>
<gene>
    <name evidence="1" type="primary">pckA</name>
    <name type="ordered locus">Bcer98_3438</name>
</gene>
<keyword id="KW-0067">ATP-binding</keyword>
<keyword id="KW-0963">Cytoplasm</keyword>
<keyword id="KW-0210">Decarboxylase</keyword>
<keyword id="KW-0312">Gluconeogenesis</keyword>
<keyword id="KW-0456">Lyase</keyword>
<keyword id="KW-0464">Manganese</keyword>
<keyword id="KW-0479">Metal-binding</keyword>
<keyword id="KW-0547">Nucleotide-binding</keyword>
<proteinExistence type="inferred from homology"/>